<feature type="transit peptide" description="Mitochondrion" evidence="2">
    <location>
        <begin position="1"/>
        <end position="40"/>
    </location>
</feature>
<feature type="chain" id="PRO_0000301702" description="Iron-sulfur cluster assembly factor IBA57 homolog, mitochondrial">
    <location>
        <begin position="41"/>
        <end position="389"/>
    </location>
</feature>
<feature type="region of interest" description="Disordered" evidence="3">
    <location>
        <begin position="1"/>
        <end position="20"/>
    </location>
</feature>
<feature type="compositionally biased region" description="Basic residues" evidence="3">
    <location>
        <begin position="7"/>
        <end position="16"/>
    </location>
</feature>
<reference key="1">
    <citation type="journal article" date="2005" name="Nature">
        <title>The genome sequence of the rice blast fungus Magnaporthe grisea.</title>
        <authorList>
            <person name="Dean R.A."/>
            <person name="Talbot N.J."/>
            <person name="Ebbole D.J."/>
            <person name="Farman M.L."/>
            <person name="Mitchell T.K."/>
            <person name="Orbach M.J."/>
            <person name="Thon M.R."/>
            <person name="Kulkarni R."/>
            <person name="Xu J.-R."/>
            <person name="Pan H."/>
            <person name="Read N.D."/>
            <person name="Lee Y.-H."/>
            <person name="Carbone I."/>
            <person name="Brown D."/>
            <person name="Oh Y.Y."/>
            <person name="Donofrio N."/>
            <person name="Jeong J.S."/>
            <person name="Soanes D.M."/>
            <person name="Djonovic S."/>
            <person name="Kolomiets E."/>
            <person name="Rehmeyer C."/>
            <person name="Li W."/>
            <person name="Harding M."/>
            <person name="Kim S."/>
            <person name="Lebrun M.-H."/>
            <person name="Bohnert H."/>
            <person name="Coughlan S."/>
            <person name="Butler J."/>
            <person name="Calvo S.E."/>
            <person name="Ma L.-J."/>
            <person name="Nicol R."/>
            <person name="Purcell S."/>
            <person name="Nusbaum C."/>
            <person name="Galagan J.E."/>
            <person name="Birren B.W."/>
        </authorList>
    </citation>
    <scope>NUCLEOTIDE SEQUENCE [LARGE SCALE GENOMIC DNA]</scope>
    <source>
        <strain>70-15 / ATCC MYA-4617 / FGSC 8958</strain>
    </source>
</reference>
<organism>
    <name type="scientific">Pyricularia oryzae (strain 70-15 / ATCC MYA-4617 / FGSC 8958)</name>
    <name type="common">Rice blast fungus</name>
    <name type="synonym">Magnaporthe oryzae</name>
    <dbReference type="NCBI Taxonomy" id="242507"/>
    <lineage>
        <taxon>Eukaryota</taxon>
        <taxon>Fungi</taxon>
        <taxon>Dikarya</taxon>
        <taxon>Ascomycota</taxon>
        <taxon>Pezizomycotina</taxon>
        <taxon>Sordariomycetes</taxon>
        <taxon>Sordariomycetidae</taxon>
        <taxon>Magnaporthales</taxon>
        <taxon>Pyriculariaceae</taxon>
        <taxon>Pyricularia</taxon>
    </lineage>
</organism>
<protein>
    <recommendedName>
        <fullName>Iron-sulfur cluster assembly factor IBA57 homolog, mitochondrial</fullName>
    </recommendedName>
</protein>
<keyword id="KW-0496">Mitochondrion</keyword>
<keyword id="KW-1185">Reference proteome</keyword>
<keyword id="KW-0809">Transit peptide</keyword>
<name>CAF17_PYRO7</name>
<gene>
    <name type="primary">CAF17</name>
    <name type="ORF">MGG_06485</name>
</gene>
<proteinExistence type="inferred from homology"/>
<comment type="subcellular location">
    <subcellularLocation>
        <location evidence="1">Mitochondrion matrix</location>
    </subcellularLocation>
</comment>
<comment type="similarity">
    <text evidence="4">Belongs to the GcvT family. CAF17/IBA57 subfamily.</text>
</comment>
<sequence length="389" mass="42604">MQASRSATRHLLRHATRPPSGFVCRSCLSRRSSSTSASPRSPPPPPPTAGFTALKSRRLISVSGPDAAKYLQGVVTANIINNNKTGFYTAFLNAQGRVLHDVFIYPDASKDGEGFLIEVDATEAERLTRHIKRYKLRAKLNLRLLDDGEATVWQAWDDSKADFAPAVGMTTPVRDPRSPMLGYRVLTPGDHAQTPQLDLDPTPETSYRIRRYLQGVAEGQTEILREHALPAESNMDVTGAIDFRKGCYVGQELTIRTRHRGVVRKRILPCVLYDHFAAPERLEYKHDGVVTAEGVPPETSIGRATKRGRSTGKWLSGVGNIGLALCRLEIMTDLTLPGEPAAALESGNDEFVLTPKSDEDVGSEGAPFKVKAFVPDWLRQGLAAQTAGH</sequence>
<evidence type="ECO:0000250" key="1">
    <source>
        <dbReference type="UniProtKB" id="P47158"/>
    </source>
</evidence>
<evidence type="ECO:0000255" key="2"/>
<evidence type="ECO:0000256" key="3">
    <source>
        <dbReference type="SAM" id="MobiDB-lite"/>
    </source>
</evidence>
<evidence type="ECO:0000305" key="4"/>
<dbReference type="EMBL" id="CM001234">
    <property type="protein sequence ID" value="EHA50756.1"/>
    <property type="molecule type" value="Genomic_DNA"/>
</dbReference>
<dbReference type="RefSeq" id="XP_003717075.1">
    <property type="nucleotide sequence ID" value="XM_003717027.1"/>
</dbReference>
<dbReference type="SMR" id="A4R8F9"/>
<dbReference type="FunCoup" id="A4R8F9">
    <property type="interactions" value="287"/>
</dbReference>
<dbReference type="STRING" id="242507.A4R8F9"/>
<dbReference type="EnsemblFungi" id="MGG_06485T0">
    <property type="protein sequence ID" value="MGG_06485T0"/>
    <property type="gene ID" value="MGG_06485"/>
</dbReference>
<dbReference type="GeneID" id="2684640"/>
<dbReference type="KEGG" id="mgr:MGG_06485"/>
<dbReference type="VEuPathDB" id="FungiDB:MGG_06485"/>
<dbReference type="eggNOG" id="KOG2929">
    <property type="taxonomic scope" value="Eukaryota"/>
</dbReference>
<dbReference type="HOGENOM" id="CLU_007884_7_0_1"/>
<dbReference type="InParanoid" id="A4R8F9"/>
<dbReference type="OMA" id="NMLVAND"/>
<dbReference type="OrthoDB" id="191995at2759"/>
<dbReference type="Proteomes" id="UP000009058">
    <property type="component" value="Chromosome 4"/>
</dbReference>
<dbReference type="GO" id="GO:0005759">
    <property type="term" value="C:mitochondrial matrix"/>
    <property type="evidence" value="ECO:0007669"/>
    <property type="project" value="TreeGrafter"/>
</dbReference>
<dbReference type="GO" id="GO:0016740">
    <property type="term" value="F:transferase activity"/>
    <property type="evidence" value="ECO:0007669"/>
    <property type="project" value="UniProtKB-KW"/>
</dbReference>
<dbReference type="GO" id="GO:0016226">
    <property type="term" value="P:iron-sulfur cluster assembly"/>
    <property type="evidence" value="ECO:0007669"/>
    <property type="project" value="TreeGrafter"/>
</dbReference>
<dbReference type="Gene3D" id="3.30.1360.120">
    <property type="entry name" value="Probable tRNA modification gtpase trme, domain 1"/>
    <property type="match status" value="1"/>
</dbReference>
<dbReference type="InterPro" id="IPR006222">
    <property type="entry name" value="GCV_T_N"/>
</dbReference>
<dbReference type="InterPro" id="IPR027266">
    <property type="entry name" value="TrmE/GcvT_dom1"/>
</dbReference>
<dbReference type="InterPro" id="IPR045179">
    <property type="entry name" value="YgfZ/GcvT"/>
</dbReference>
<dbReference type="InterPro" id="IPR017703">
    <property type="entry name" value="YgfZ/GcvT_CS"/>
</dbReference>
<dbReference type="NCBIfam" id="TIGR03317">
    <property type="entry name" value="ygfZ_signature"/>
    <property type="match status" value="1"/>
</dbReference>
<dbReference type="PANTHER" id="PTHR22602">
    <property type="entry name" value="TRANSFERASE CAF17, MITOCHONDRIAL-RELATED"/>
    <property type="match status" value="1"/>
</dbReference>
<dbReference type="PANTHER" id="PTHR22602:SF0">
    <property type="entry name" value="TRANSFERASE CAF17, MITOCHONDRIAL-RELATED"/>
    <property type="match status" value="1"/>
</dbReference>
<dbReference type="Pfam" id="PF25455">
    <property type="entry name" value="Beta-barrel_CAF17_C"/>
    <property type="match status" value="1"/>
</dbReference>
<dbReference type="Pfam" id="PF01571">
    <property type="entry name" value="GCV_T"/>
    <property type="match status" value="1"/>
</dbReference>
<dbReference type="SUPFAM" id="SSF103025">
    <property type="entry name" value="Folate-binding domain"/>
    <property type="match status" value="1"/>
</dbReference>
<accession>A4R8F9</accession>
<accession>G4N6Z2</accession>